<sequence>MKIAILSREPRNYSTRRLVEVAQARGHQVEVLDTLRCYMNIASHSPSIHYEGRELESYDAVIPRIGASITFYGTAVLRQFEMMNTMALNSSVAISRSRDKLRAMQLLSRHGIGLPITGYAHSTHDVPDLITMVGGAPLVVKLLEGTQGIGVVLCETHKAAESVIEAFIQTNNNILVQEYIREANGADIRCLVVNGKVVAAMRRQAQPGEFRSNLHRGGTAEAIKISPEERATAVQAAKIMGLDVAGVDILRSARGPLVLEVNSSPGLQGVEAASGKDVAGKIIEFLELKASRKNKPAE</sequence>
<accession>A4SSJ2</accession>
<reference key="1">
    <citation type="journal article" date="2008" name="BMC Genomics">
        <title>The genome of Aeromonas salmonicida subsp. salmonicida A449: insights into the evolution of a fish pathogen.</title>
        <authorList>
            <person name="Reith M.E."/>
            <person name="Singh R.K."/>
            <person name="Curtis B."/>
            <person name="Boyd J.M."/>
            <person name="Bouevitch A."/>
            <person name="Kimball J."/>
            <person name="Munholland J."/>
            <person name="Murphy C."/>
            <person name="Sarty D."/>
            <person name="Williams J."/>
            <person name="Nash J.H."/>
            <person name="Johnson S.C."/>
            <person name="Brown L.L."/>
        </authorList>
    </citation>
    <scope>NUCLEOTIDE SEQUENCE [LARGE SCALE GENOMIC DNA]</scope>
    <source>
        <strain>A449</strain>
    </source>
</reference>
<organism>
    <name type="scientific">Aeromonas salmonicida (strain A449)</name>
    <dbReference type="NCBI Taxonomy" id="382245"/>
    <lineage>
        <taxon>Bacteria</taxon>
        <taxon>Pseudomonadati</taxon>
        <taxon>Pseudomonadota</taxon>
        <taxon>Gammaproteobacteria</taxon>
        <taxon>Aeromonadales</taxon>
        <taxon>Aeromonadaceae</taxon>
        <taxon>Aeromonas</taxon>
    </lineage>
</organism>
<protein>
    <recommendedName>
        <fullName evidence="1">Probable alpha-L-glutamate ligase</fullName>
        <ecNumber evidence="1">6.3.2.-</ecNumber>
    </recommendedName>
</protein>
<gene>
    <name evidence="1" type="primary">rimK</name>
    <name type="ordered locus">ASA_3911</name>
</gene>
<keyword id="KW-0067">ATP-binding</keyword>
<keyword id="KW-0436">Ligase</keyword>
<keyword id="KW-0460">Magnesium</keyword>
<keyword id="KW-0464">Manganese</keyword>
<keyword id="KW-0479">Metal-binding</keyword>
<keyword id="KW-0547">Nucleotide-binding</keyword>
<keyword id="KW-0648">Protein biosynthesis</keyword>
<comment type="cofactor">
    <cofactor evidence="1">
        <name>Mg(2+)</name>
        <dbReference type="ChEBI" id="CHEBI:18420"/>
    </cofactor>
    <cofactor evidence="1">
        <name>Mn(2+)</name>
        <dbReference type="ChEBI" id="CHEBI:29035"/>
    </cofactor>
    <text evidence="1">Binds 2 magnesium or manganese ions per subunit.</text>
</comment>
<comment type="similarity">
    <text evidence="1">Belongs to the RimK family.</text>
</comment>
<dbReference type="EC" id="6.3.2.-" evidence="1"/>
<dbReference type="EMBL" id="CP000644">
    <property type="protein sequence ID" value="ABO91864.1"/>
    <property type="molecule type" value="Genomic_DNA"/>
</dbReference>
<dbReference type="RefSeq" id="WP_005316298.1">
    <property type="nucleotide sequence ID" value="NC_009348.1"/>
</dbReference>
<dbReference type="SMR" id="A4SSJ2"/>
<dbReference type="STRING" id="29491.GCA_000820065_00919"/>
<dbReference type="GeneID" id="79881612"/>
<dbReference type="KEGG" id="asa:ASA_3911"/>
<dbReference type="eggNOG" id="COG0189">
    <property type="taxonomic scope" value="Bacteria"/>
</dbReference>
<dbReference type="HOGENOM" id="CLU_054353_0_1_6"/>
<dbReference type="Proteomes" id="UP000000225">
    <property type="component" value="Chromosome"/>
</dbReference>
<dbReference type="GO" id="GO:0005737">
    <property type="term" value="C:cytoplasm"/>
    <property type="evidence" value="ECO:0007669"/>
    <property type="project" value="TreeGrafter"/>
</dbReference>
<dbReference type="GO" id="GO:0005524">
    <property type="term" value="F:ATP binding"/>
    <property type="evidence" value="ECO:0007669"/>
    <property type="project" value="UniProtKB-UniRule"/>
</dbReference>
<dbReference type="GO" id="GO:0046872">
    <property type="term" value="F:metal ion binding"/>
    <property type="evidence" value="ECO:0007669"/>
    <property type="project" value="UniProtKB-KW"/>
</dbReference>
<dbReference type="GO" id="GO:0018169">
    <property type="term" value="F:ribosomal S6-glutamic acid ligase activity"/>
    <property type="evidence" value="ECO:0007669"/>
    <property type="project" value="TreeGrafter"/>
</dbReference>
<dbReference type="GO" id="GO:0036211">
    <property type="term" value="P:protein modification process"/>
    <property type="evidence" value="ECO:0007669"/>
    <property type="project" value="InterPro"/>
</dbReference>
<dbReference type="GO" id="GO:0009432">
    <property type="term" value="P:SOS response"/>
    <property type="evidence" value="ECO:0007669"/>
    <property type="project" value="TreeGrafter"/>
</dbReference>
<dbReference type="GO" id="GO:0006412">
    <property type="term" value="P:translation"/>
    <property type="evidence" value="ECO:0007669"/>
    <property type="project" value="UniProtKB-KW"/>
</dbReference>
<dbReference type="FunFam" id="3.30.470.20:FF:000058">
    <property type="entry name" value="Alpha-aminoadipate--LysW ligase LysX protein"/>
    <property type="match status" value="1"/>
</dbReference>
<dbReference type="FunFam" id="3.40.50.20:FF:000004">
    <property type="entry name" value="Probable alpha-L-glutamate ligase"/>
    <property type="match status" value="1"/>
</dbReference>
<dbReference type="FunFam" id="3.30.1490.20:FF:000005">
    <property type="entry name" value="Probable alpha-L-glutamate ligase 1"/>
    <property type="match status" value="1"/>
</dbReference>
<dbReference type="Gene3D" id="3.40.50.20">
    <property type="match status" value="1"/>
</dbReference>
<dbReference type="Gene3D" id="3.30.1490.20">
    <property type="entry name" value="ATP-grasp fold, A domain"/>
    <property type="match status" value="1"/>
</dbReference>
<dbReference type="Gene3D" id="3.30.470.20">
    <property type="entry name" value="ATP-grasp fold, B domain"/>
    <property type="match status" value="1"/>
</dbReference>
<dbReference type="HAMAP" id="MF_01552">
    <property type="entry name" value="RimK"/>
    <property type="match status" value="1"/>
</dbReference>
<dbReference type="InterPro" id="IPR011761">
    <property type="entry name" value="ATP-grasp"/>
</dbReference>
<dbReference type="InterPro" id="IPR013651">
    <property type="entry name" value="ATP-grasp_RimK-type"/>
</dbReference>
<dbReference type="InterPro" id="IPR013815">
    <property type="entry name" value="ATP_grasp_subdomain_1"/>
</dbReference>
<dbReference type="InterPro" id="IPR023533">
    <property type="entry name" value="RimK"/>
</dbReference>
<dbReference type="InterPro" id="IPR041107">
    <property type="entry name" value="Rimk_N"/>
</dbReference>
<dbReference type="InterPro" id="IPR004666">
    <property type="entry name" value="Rp_bS6_RimK/Lys_biosynth_LsyX"/>
</dbReference>
<dbReference type="NCBIfam" id="NF007764">
    <property type="entry name" value="PRK10446.1"/>
    <property type="match status" value="1"/>
</dbReference>
<dbReference type="NCBIfam" id="TIGR00768">
    <property type="entry name" value="rimK_fam"/>
    <property type="match status" value="1"/>
</dbReference>
<dbReference type="PANTHER" id="PTHR21621:SF7">
    <property type="entry name" value="RIBOSOMAL PROTEIN BS6--L-GLUTAMATE LIGASE"/>
    <property type="match status" value="1"/>
</dbReference>
<dbReference type="PANTHER" id="PTHR21621">
    <property type="entry name" value="RIBOSOMAL PROTEIN S6 MODIFICATION PROTEIN"/>
    <property type="match status" value="1"/>
</dbReference>
<dbReference type="Pfam" id="PF08443">
    <property type="entry name" value="RimK"/>
    <property type="match status" value="1"/>
</dbReference>
<dbReference type="Pfam" id="PF18030">
    <property type="entry name" value="Rimk_N"/>
    <property type="match status" value="1"/>
</dbReference>
<dbReference type="SUPFAM" id="SSF56059">
    <property type="entry name" value="Glutathione synthetase ATP-binding domain-like"/>
    <property type="match status" value="1"/>
</dbReference>
<dbReference type="PROSITE" id="PS50975">
    <property type="entry name" value="ATP_GRASP"/>
    <property type="match status" value="1"/>
</dbReference>
<evidence type="ECO:0000255" key="1">
    <source>
        <dbReference type="HAMAP-Rule" id="MF_01552"/>
    </source>
</evidence>
<proteinExistence type="inferred from homology"/>
<name>RIMK_AERS4</name>
<feature type="chain" id="PRO_1000068831" description="Probable alpha-L-glutamate ligase">
    <location>
        <begin position="1"/>
        <end position="298"/>
    </location>
</feature>
<feature type="domain" description="ATP-grasp" evidence="1">
    <location>
        <begin position="104"/>
        <end position="287"/>
    </location>
</feature>
<feature type="binding site" evidence="1">
    <location>
        <position position="141"/>
    </location>
    <ligand>
        <name>ATP</name>
        <dbReference type="ChEBI" id="CHEBI:30616"/>
    </ligand>
</feature>
<feature type="binding site" evidence="1">
    <location>
        <begin position="178"/>
        <end position="179"/>
    </location>
    <ligand>
        <name>ATP</name>
        <dbReference type="ChEBI" id="CHEBI:30616"/>
    </ligand>
</feature>
<feature type="binding site" evidence="1">
    <location>
        <position position="187"/>
    </location>
    <ligand>
        <name>ATP</name>
        <dbReference type="ChEBI" id="CHEBI:30616"/>
    </ligand>
</feature>
<feature type="binding site" evidence="1">
    <location>
        <begin position="211"/>
        <end position="213"/>
    </location>
    <ligand>
        <name>ATP</name>
        <dbReference type="ChEBI" id="CHEBI:30616"/>
    </ligand>
</feature>
<feature type="binding site" evidence="1">
    <location>
        <position position="248"/>
    </location>
    <ligand>
        <name>Mg(2+)</name>
        <dbReference type="ChEBI" id="CHEBI:18420"/>
        <label>1</label>
    </ligand>
</feature>
<feature type="binding site" evidence="1">
    <location>
        <position position="248"/>
    </location>
    <ligand>
        <name>Mn(2+)</name>
        <dbReference type="ChEBI" id="CHEBI:29035"/>
        <label>1</label>
    </ligand>
</feature>
<feature type="binding site" evidence="1">
    <location>
        <position position="260"/>
    </location>
    <ligand>
        <name>Mg(2+)</name>
        <dbReference type="ChEBI" id="CHEBI:18420"/>
        <label>1</label>
    </ligand>
</feature>
<feature type="binding site" evidence="1">
    <location>
        <position position="260"/>
    </location>
    <ligand>
        <name>Mg(2+)</name>
        <dbReference type="ChEBI" id="CHEBI:18420"/>
        <label>2</label>
    </ligand>
</feature>
<feature type="binding site" evidence="1">
    <location>
        <position position="260"/>
    </location>
    <ligand>
        <name>Mn(2+)</name>
        <dbReference type="ChEBI" id="CHEBI:29035"/>
        <label>1</label>
    </ligand>
</feature>
<feature type="binding site" evidence="1">
    <location>
        <position position="260"/>
    </location>
    <ligand>
        <name>Mn(2+)</name>
        <dbReference type="ChEBI" id="CHEBI:29035"/>
        <label>2</label>
    </ligand>
</feature>
<feature type="binding site" evidence="1">
    <location>
        <position position="262"/>
    </location>
    <ligand>
        <name>Mg(2+)</name>
        <dbReference type="ChEBI" id="CHEBI:18420"/>
        <label>2</label>
    </ligand>
</feature>
<feature type="binding site" evidence="1">
    <location>
        <position position="262"/>
    </location>
    <ligand>
        <name>Mn(2+)</name>
        <dbReference type="ChEBI" id="CHEBI:29035"/>
        <label>2</label>
    </ligand>
</feature>